<protein>
    <recommendedName>
        <fullName evidence="1">Periplasmic trehalase</fullName>
        <ecNumber evidence="1">3.2.1.28</ecNumber>
    </recommendedName>
    <alternativeName>
        <fullName evidence="1">Alpha,alpha-trehalase</fullName>
    </alternativeName>
    <alternativeName>
        <fullName evidence="1">Alpha,alpha-trehalose glucohydrolase</fullName>
    </alternativeName>
</protein>
<proteinExistence type="inferred from homology"/>
<sequence>MIPPEIRRSVLLQKAIKLALAGTLLTFASFSATAADPSSDTETPQPPDILLGPLFNDVQNAKLFPDQKTFADAIPNSDPLMILADYRMQRNQSGFDLRHFVDVNFTLPKAGEKYVPPAGQSLREHIDGLWPVLTRSTKNVEKWDSLLPLPESYVVPGGRFREIYYWDSYFTMLGLAESGHWDKVADMVANFGYEIDAWGHIPNGNRTYYLSRSQPPFFAFMVELLAQHEGDDALKEYLPQLQKEYAYWMEGVETLQPGQQNQRVVKLEDGSVLNRYWDDRDTPRPESWVEDIATVKSNPNRPATEIYRDLRSAAASGWDFSSRWMDNPQQLSTIRTTTIVPVDLNALLYQLEKTLARASAAAGDRAKASHYDALANARQKAIEMHLWNNKEGWYADYDLKNNKIRDQLTAAALFPLYVNAAAKDRAAKVAAAAQAHLLQPGGLATTSVKSGQQWDAPNGWAPLQWVAAEGLQNYGQDDVAMEVTWRFLTNVQHTYDREKKLVEKYDVSSTGTGGGGGEYPLQDGFGWTNGVTLKMLDLICPQEKPCDSVPSTRPASLSATPTKTPSAATQ</sequence>
<keyword id="KW-0326">Glycosidase</keyword>
<keyword id="KW-0378">Hydrolase</keyword>
<keyword id="KW-0574">Periplasm</keyword>
<keyword id="KW-0732">Signal</keyword>
<comment type="function">
    <text evidence="1">Provides the cells with the ability to utilize trehalose at high osmolarity by splitting it into glucose molecules that can subsequently be taken up by the phosphotransferase-mediated uptake system.</text>
</comment>
<comment type="catalytic activity">
    <reaction evidence="1">
        <text>alpha,alpha-trehalose + H2O = alpha-D-glucose + beta-D-glucose</text>
        <dbReference type="Rhea" id="RHEA:32675"/>
        <dbReference type="ChEBI" id="CHEBI:15377"/>
        <dbReference type="ChEBI" id="CHEBI:15903"/>
        <dbReference type="ChEBI" id="CHEBI:16551"/>
        <dbReference type="ChEBI" id="CHEBI:17925"/>
        <dbReference type="EC" id="3.2.1.28"/>
    </reaction>
</comment>
<comment type="subunit">
    <text evidence="1">Monomer.</text>
</comment>
<comment type="subcellular location">
    <subcellularLocation>
        <location evidence="1">Periplasm</location>
    </subcellularLocation>
</comment>
<comment type="similarity">
    <text evidence="1">Belongs to the glycosyl hydrolase 37 family.</text>
</comment>
<evidence type="ECO:0000255" key="1">
    <source>
        <dbReference type="HAMAP-Rule" id="MF_01060"/>
    </source>
</evidence>
<evidence type="ECO:0000256" key="2">
    <source>
        <dbReference type="SAM" id="MobiDB-lite"/>
    </source>
</evidence>
<name>TREA_SALDC</name>
<organism>
    <name type="scientific">Salmonella dublin (strain CT_02021853)</name>
    <dbReference type="NCBI Taxonomy" id="439851"/>
    <lineage>
        <taxon>Bacteria</taxon>
        <taxon>Pseudomonadati</taxon>
        <taxon>Pseudomonadota</taxon>
        <taxon>Gammaproteobacteria</taxon>
        <taxon>Enterobacterales</taxon>
        <taxon>Enterobacteriaceae</taxon>
        <taxon>Salmonella</taxon>
    </lineage>
</organism>
<gene>
    <name evidence="1" type="primary">treA</name>
    <name type="ordered locus">SeD_A1522</name>
</gene>
<dbReference type="EC" id="3.2.1.28" evidence="1"/>
<dbReference type="EMBL" id="CP001144">
    <property type="protein sequence ID" value="ACH75938.1"/>
    <property type="molecule type" value="Genomic_DNA"/>
</dbReference>
<dbReference type="RefSeq" id="WP_000612838.1">
    <property type="nucleotide sequence ID" value="NC_011205.1"/>
</dbReference>
<dbReference type="SMR" id="B5FTN7"/>
<dbReference type="CAZy" id="GH37">
    <property type="family name" value="Glycoside Hydrolase Family 37"/>
</dbReference>
<dbReference type="KEGG" id="sed:SeD_A1522"/>
<dbReference type="HOGENOM" id="CLU_006451_3_1_6"/>
<dbReference type="Proteomes" id="UP000008322">
    <property type="component" value="Chromosome"/>
</dbReference>
<dbReference type="GO" id="GO:0042597">
    <property type="term" value="C:periplasmic space"/>
    <property type="evidence" value="ECO:0007669"/>
    <property type="project" value="UniProtKB-SubCell"/>
</dbReference>
<dbReference type="GO" id="GO:0004555">
    <property type="term" value="F:alpha,alpha-trehalase activity"/>
    <property type="evidence" value="ECO:0007669"/>
    <property type="project" value="UniProtKB-UniRule"/>
</dbReference>
<dbReference type="GO" id="GO:0071474">
    <property type="term" value="P:cellular hyperosmotic response"/>
    <property type="evidence" value="ECO:0007669"/>
    <property type="project" value="InterPro"/>
</dbReference>
<dbReference type="GO" id="GO:0005993">
    <property type="term" value="P:trehalose catabolic process"/>
    <property type="evidence" value="ECO:0007669"/>
    <property type="project" value="InterPro"/>
</dbReference>
<dbReference type="FunFam" id="1.50.10.10:FF:000003">
    <property type="entry name" value="Cytoplasmic trehalase"/>
    <property type="match status" value="1"/>
</dbReference>
<dbReference type="Gene3D" id="1.50.10.10">
    <property type="match status" value="1"/>
</dbReference>
<dbReference type="HAMAP" id="MF_01060">
    <property type="entry name" value="Peripl_trehalase"/>
    <property type="match status" value="1"/>
</dbReference>
<dbReference type="InterPro" id="IPR008928">
    <property type="entry name" value="6-hairpin_glycosidase_sf"/>
</dbReference>
<dbReference type="InterPro" id="IPR012341">
    <property type="entry name" value="6hp_glycosidase-like_sf"/>
</dbReference>
<dbReference type="InterPro" id="IPR001661">
    <property type="entry name" value="Glyco_hydro_37"/>
</dbReference>
<dbReference type="InterPro" id="IPR018232">
    <property type="entry name" value="Glyco_hydro_37_CS"/>
</dbReference>
<dbReference type="InterPro" id="IPR023720">
    <property type="entry name" value="Trehalase_periplasmic"/>
</dbReference>
<dbReference type="NCBIfam" id="NF009773">
    <property type="entry name" value="PRK13270.1"/>
    <property type="match status" value="1"/>
</dbReference>
<dbReference type="NCBIfam" id="NF009774">
    <property type="entry name" value="PRK13271.1"/>
    <property type="match status" value="1"/>
</dbReference>
<dbReference type="PANTHER" id="PTHR23403">
    <property type="entry name" value="TREHALASE"/>
    <property type="match status" value="1"/>
</dbReference>
<dbReference type="PANTHER" id="PTHR23403:SF1">
    <property type="entry name" value="TREHALASE"/>
    <property type="match status" value="1"/>
</dbReference>
<dbReference type="Pfam" id="PF01204">
    <property type="entry name" value="Trehalase"/>
    <property type="match status" value="1"/>
</dbReference>
<dbReference type="PRINTS" id="PR00744">
    <property type="entry name" value="GLHYDRLASE37"/>
</dbReference>
<dbReference type="SUPFAM" id="SSF48208">
    <property type="entry name" value="Six-hairpin glycosidases"/>
    <property type="match status" value="1"/>
</dbReference>
<dbReference type="PROSITE" id="PS00927">
    <property type="entry name" value="TREHALASE_1"/>
    <property type="match status" value="1"/>
</dbReference>
<dbReference type="PROSITE" id="PS00928">
    <property type="entry name" value="TREHALASE_2"/>
    <property type="match status" value="1"/>
</dbReference>
<accession>B5FTN7</accession>
<feature type="signal peptide" evidence="1">
    <location>
        <begin position="1"/>
        <end position="34"/>
    </location>
</feature>
<feature type="chain" id="PRO_1000136424" description="Periplasmic trehalase">
    <location>
        <begin position="35"/>
        <end position="570"/>
    </location>
</feature>
<feature type="region of interest" description="Disordered" evidence="2">
    <location>
        <begin position="544"/>
        <end position="570"/>
    </location>
</feature>
<feature type="compositionally biased region" description="Low complexity" evidence="2">
    <location>
        <begin position="554"/>
        <end position="570"/>
    </location>
</feature>
<feature type="active site" description="Proton donor/acceptor" evidence="1">
    <location>
        <position position="319"/>
    </location>
</feature>
<feature type="active site" description="Proton donor/acceptor" evidence="1">
    <location>
        <position position="503"/>
    </location>
</feature>
<feature type="binding site" evidence="1">
    <location>
        <position position="159"/>
    </location>
    <ligand>
        <name>substrate</name>
    </ligand>
</feature>
<feature type="binding site" evidence="1">
    <location>
        <begin position="166"/>
        <end position="167"/>
    </location>
    <ligand>
        <name>substrate</name>
    </ligand>
</feature>
<feature type="binding site" evidence="1">
    <location>
        <position position="203"/>
    </location>
    <ligand>
        <name>substrate</name>
    </ligand>
</feature>
<feature type="binding site" evidence="1">
    <location>
        <begin position="212"/>
        <end position="214"/>
    </location>
    <ligand>
        <name>substrate</name>
    </ligand>
</feature>
<feature type="binding site" evidence="1">
    <location>
        <begin position="284"/>
        <end position="286"/>
    </location>
    <ligand>
        <name>substrate</name>
    </ligand>
</feature>
<feature type="binding site" evidence="1">
    <location>
        <position position="317"/>
    </location>
    <ligand>
        <name>substrate</name>
    </ligand>
</feature>
<feature type="binding site" evidence="1">
    <location>
        <position position="518"/>
    </location>
    <ligand>
        <name>substrate</name>
    </ligand>
</feature>
<reference key="1">
    <citation type="journal article" date="2011" name="J. Bacteriol.">
        <title>Comparative genomics of 28 Salmonella enterica isolates: evidence for CRISPR-mediated adaptive sublineage evolution.</title>
        <authorList>
            <person name="Fricke W.F."/>
            <person name="Mammel M.K."/>
            <person name="McDermott P.F."/>
            <person name="Tartera C."/>
            <person name="White D.G."/>
            <person name="Leclerc J.E."/>
            <person name="Ravel J."/>
            <person name="Cebula T.A."/>
        </authorList>
    </citation>
    <scope>NUCLEOTIDE SEQUENCE [LARGE SCALE GENOMIC DNA]</scope>
    <source>
        <strain>CT_02021853</strain>
    </source>
</reference>